<reference key="1">
    <citation type="submission" date="2006-09" db="EMBL/GenBank/DDBJ databases">
        <title>Complete sequence of Rhodopseudomonas palustris BisA53.</title>
        <authorList>
            <consortium name="US DOE Joint Genome Institute"/>
            <person name="Copeland A."/>
            <person name="Lucas S."/>
            <person name="Lapidus A."/>
            <person name="Barry K."/>
            <person name="Detter J.C."/>
            <person name="Glavina del Rio T."/>
            <person name="Hammon N."/>
            <person name="Israni S."/>
            <person name="Dalin E."/>
            <person name="Tice H."/>
            <person name="Pitluck S."/>
            <person name="Chain P."/>
            <person name="Malfatti S."/>
            <person name="Shin M."/>
            <person name="Vergez L."/>
            <person name="Schmutz J."/>
            <person name="Larimer F."/>
            <person name="Land M."/>
            <person name="Hauser L."/>
            <person name="Pelletier D.A."/>
            <person name="Kyrpides N."/>
            <person name="Kim E."/>
            <person name="Harwood C.S."/>
            <person name="Oda Y."/>
            <person name="Richardson P."/>
        </authorList>
    </citation>
    <scope>NUCLEOTIDE SEQUENCE [LARGE SCALE GENOMIC DNA]</scope>
    <source>
        <strain>BisA53</strain>
    </source>
</reference>
<proteinExistence type="inferred from homology"/>
<comment type="function">
    <text evidence="1">NDH-1 shuttles electrons from NADH, via FMN and iron-sulfur (Fe-S) centers, to quinones in the respiratory chain. The immediate electron acceptor for the enzyme in this species is believed to be ubiquinone. Couples the redox reaction to proton translocation (for every two electrons transferred, four hydrogen ions are translocated across the cytoplasmic membrane), and thus conserves the redox energy in a proton gradient.</text>
</comment>
<comment type="catalytic activity">
    <reaction evidence="1">
        <text>a quinone + NADH + 5 H(+)(in) = a quinol + NAD(+) + 4 H(+)(out)</text>
        <dbReference type="Rhea" id="RHEA:57888"/>
        <dbReference type="ChEBI" id="CHEBI:15378"/>
        <dbReference type="ChEBI" id="CHEBI:24646"/>
        <dbReference type="ChEBI" id="CHEBI:57540"/>
        <dbReference type="ChEBI" id="CHEBI:57945"/>
        <dbReference type="ChEBI" id="CHEBI:132124"/>
    </reaction>
</comment>
<comment type="subunit">
    <text evidence="1">NDH-1 is composed of 14 different subunits. Subunits NuoA, H, J, K, L, M, N constitute the membrane sector of the complex.</text>
</comment>
<comment type="subcellular location">
    <subcellularLocation>
        <location evidence="1">Cell inner membrane</location>
        <topology evidence="1">Multi-pass membrane protein</topology>
    </subcellularLocation>
</comment>
<comment type="similarity">
    <text evidence="1">Belongs to the complex I subunit 3 family.</text>
</comment>
<protein>
    <recommendedName>
        <fullName evidence="1">NADH-quinone oxidoreductase subunit A</fullName>
        <ecNumber evidence="1">7.1.1.-</ecNumber>
    </recommendedName>
    <alternativeName>
        <fullName evidence="1">NADH dehydrogenase I subunit A</fullName>
    </alternativeName>
    <alternativeName>
        <fullName evidence="1">NDH-1 subunit A</fullName>
    </alternativeName>
    <alternativeName>
        <fullName evidence="1">NUO1</fullName>
    </alternativeName>
</protein>
<sequence length="130" mass="13700">MADLIFPIAPGAALAIHVALSAGIVAAIIVVATIIREKRAGARPDVPYESGILPGTPPQGPQNAPYFLIAALFVIFDMEAAILFAWAVAARDAGWVGLIEAAIFIGVLLLALIYLWVDGALDWGGPRQRK</sequence>
<keyword id="KW-0997">Cell inner membrane</keyword>
<keyword id="KW-1003">Cell membrane</keyword>
<keyword id="KW-0472">Membrane</keyword>
<keyword id="KW-0520">NAD</keyword>
<keyword id="KW-0874">Quinone</keyword>
<keyword id="KW-1278">Translocase</keyword>
<keyword id="KW-0812">Transmembrane</keyword>
<keyword id="KW-1133">Transmembrane helix</keyword>
<keyword id="KW-0813">Transport</keyword>
<keyword id="KW-0830">Ubiquinone</keyword>
<name>NUOA_RHOP5</name>
<organism>
    <name type="scientific">Rhodopseudomonas palustris (strain BisA53)</name>
    <dbReference type="NCBI Taxonomy" id="316055"/>
    <lineage>
        <taxon>Bacteria</taxon>
        <taxon>Pseudomonadati</taxon>
        <taxon>Pseudomonadota</taxon>
        <taxon>Alphaproteobacteria</taxon>
        <taxon>Hyphomicrobiales</taxon>
        <taxon>Nitrobacteraceae</taxon>
        <taxon>Rhodopseudomonas</taxon>
    </lineage>
</organism>
<evidence type="ECO:0000255" key="1">
    <source>
        <dbReference type="HAMAP-Rule" id="MF_01394"/>
    </source>
</evidence>
<accession>Q07QX5</accession>
<gene>
    <name evidence="1" type="primary">nuoA</name>
    <name type="ordered locus">RPE_1710</name>
</gene>
<dbReference type="EC" id="7.1.1.-" evidence="1"/>
<dbReference type="EMBL" id="CP000463">
    <property type="protein sequence ID" value="ABJ05659.1"/>
    <property type="molecule type" value="Genomic_DNA"/>
</dbReference>
<dbReference type="SMR" id="Q07QX5"/>
<dbReference type="STRING" id="316055.RPE_1710"/>
<dbReference type="KEGG" id="rpe:RPE_1710"/>
<dbReference type="eggNOG" id="COG0838">
    <property type="taxonomic scope" value="Bacteria"/>
</dbReference>
<dbReference type="HOGENOM" id="CLU_119549_2_1_5"/>
<dbReference type="OrthoDB" id="9791970at2"/>
<dbReference type="GO" id="GO:0030964">
    <property type="term" value="C:NADH dehydrogenase complex"/>
    <property type="evidence" value="ECO:0007669"/>
    <property type="project" value="TreeGrafter"/>
</dbReference>
<dbReference type="GO" id="GO:0005886">
    <property type="term" value="C:plasma membrane"/>
    <property type="evidence" value="ECO:0007669"/>
    <property type="project" value="UniProtKB-SubCell"/>
</dbReference>
<dbReference type="GO" id="GO:0008137">
    <property type="term" value="F:NADH dehydrogenase (ubiquinone) activity"/>
    <property type="evidence" value="ECO:0007669"/>
    <property type="project" value="InterPro"/>
</dbReference>
<dbReference type="GO" id="GO:0050136">
    <property type="term" value="F:NADH:ubiquinone reductase (non-electrogenic) activity"/>
    <property type="evidence" value="ECO:0007669"/>
    <property type="project" value="UniProtKB-UniRule"/>
</dbReference>
<dbReference type="GO" id="GO:0048038">
    <property type="term" value="F:quinone binding"/>
    <property type="evidence" value="ECO:0007669"/>
    <property type="project" value="UniProtKB-KW"/>
</dbReference>
<dbReference type="Gene3D" id="1.20.58.1610">
    <property type="entry name" value="NADH:ubiquinone/plastoquinone oxidoreductase, chain 3"/>
    <property type="match status" value="1"/>
</dbReference>
<dbReference type="HAMAP" id="MF_01394">
    <property type="entry name" value="NDH1_NuoA"/>
    <property type="match status" value="1"/>
</dbReference>
<dbReference type="InterPro" id="IPR023043">
    <property type="entry name" value="NAD(P)H_OxRDtase_bac/plastid"/>
</dbReference>
<dbReference type="InterPro" id="IPR000440">
    <property type="entry name" value="NADH_UbQ/plastoQ_OxRdtase_su3"/>
</dbReference>
<dbReference type="InterPro" id="IPR038430">
    <property type="entry name" value="NDAH_ubi_oxred_su3_sf"/>
</dbReference>
<dbReference type="PANTHER" id="PTHR11058:SF21">
    <property type="entry name" value="NADH-QUINONE OXIDOREDUCTASE SUBUNIT A"/>
    <property type="match status" value="1"/>
</dbReference>
<dbReference type="PANTHER" id="PTHR11058">
    <property type="entry name" value="NADH-UBIQUINONE OXIDOREDUCTASE CHAIN 3"/>
    <property type="match status" value="1"/>
</dbReference>
<dbReference type="Pfam" id="PF00507">
    <property type="entry name" value="Oxidored_q4"/>
    <property type="match status" value="1"/>
</dbReference>
<feature type="chain" id="PRO_0000362756" description="NADH-quinone oxidoreductase subunit A">
    <location>
        <begin position="1"/>
        <end position="130"/>
    </location>
</feature>
<feature type="transmembrane region" description="Helical" evidence="1">
    <location>
        <begin position="15"/>
        <end position="35"/>
    </location>
</feature>
<feature type="transmembrane region" description="Helical" evidence="1">
    <location>
        <begin position="67"/>
        <end position="87"/>
    </location>
</feature>
<feature type="transmembrane region" description="Helical" evidence="1">
    <location>
        <begin position="95"/>
        <end position="115"/>
    </location>
</feature>